<organism>
    <name type="scientific">Listeria innocua serovar 6a (strain ATCC BAA-680 / CLIP 11262)</name>
    <dbReference type="NCBI Taxonomy" id="272626"/>
    <lineage>
        <taxon>Bacteria</taxon>
        <taxon>Bacillati</taxon>
        <taxon>Bacillota</taxon>
        <taxon>Bacilli</taxon>
        <taxon>Bacillales</taxon>
        <taxon>Listeriaceae</taxon>
        <taxon>Listeria</taxon>
    </lineage>
</organism>
<sequence length="125" mass="13237">MISIVLVSHSQKITEGLQEMIVEMVGDTVHIISSGGTGDGRLGTNALMIADNIATCTNSEHIYIFCDIGSAILSAETALELLDTELLEKTTIIDAPLVEGAFTAAVQSLVNPSKEAILQELTNVH</sequence>
<reference key="1">
    <citation type="journal article" date="2001" name="Science">
        <title>Comparative genomics of Listeria species.</title>
        <authorList>
            <person name="Glaser P."/>
            <person name="Frangeul L."/>
            <person name="Buchrieser C."/>
            <person name="Rusniok C."/>
            <person name="Amend A."/>
            <person name="Baquero F."/>
            <person name="Berche P."/>
            <person name="Bloecker H."/>
            <person name="Brandt P."/>
            <person name="Chakraborty T."/>
            <person name="Charbit A."/>
            <person name="Chetouani F."/>
            <person name="Couve E."/>
            <person name="de Daruvar A."/>
            <person name="Dehoux P."/>
            <person name="Domann E."/>
            <person name="Dominguez-Bernal G."/>
            <person name="Duchaud E."/>
            <person name="Durant L."/>
            <person name="Dussurget O."/>
            <person name="Entian K.-D."/>
            <person name="Fsihi H."/>
            <person name="Garcia-del Portillo F."/>
            <person name="Garrido P."/>
            <person name="Gautier L."/>
            <person name="Goebel W."/>
            <person name="Gomez-Lopez N."/>
            <person name="Hain T."/>
            <person name="Hauf J."/>
            <person name="Jackson D."/>
            <person name="Jones L.-M."/>
            <person name="Kaerst U."/>
            <person name="Kreft J."/>
            <person name="Kuhn M."/>
            <person name="Kunst F."/>
            <person name="Kurapkat G."/>
            <person name="Madueno E."/>
            <person name="Maitournam A."/>
            <person name="Mata Vicente J."/>
            <person name="Ng E."/>
            <person name="Nedjari H."/>
            <person name="Nordsiek G."/>
            <person name="Novella S."/>
            <person name="de Pablos B."/>
            <person name="Perez-Diaz J.-C."/>
            <person name="Purcell R."/>
            <person name="Remmel B."/>
            <person name="Rose M."/>
            <person name="Schlueter T."/>
            <person name="Simoes N."/>
            <person name="Tierrez A."/>
            <person name="Vazquez-Boland J.-A."/>
            <person name="Voss H."/>
            <person name="Wehland J."/>
            <person name="Cossart P."/>
        </authorList>
    </citation>
    <scope>NUCLEOTIDE SEQUENCE [LARGE SCALE GENOMIC DNA]</scope>
    <source>
        <strain>ATCC BAA-680 / CLIP 11262</strain>
    </source>
</reference>
<reference key="2">
    <citation type="journal article" date="2012" name="J. Bacteriol.">
        <title>Novel listerial glycerol dehydrogenase- and phosphoenolpyruvate-dependent dihydroxyacetone kinase system connected to the pentose phosphate pathway.</title>
        <authorList>
            <person name="Monniot C."/>
            <person name="Zebre A.C."/>
            <person name="Ake F.M."/>
            <person name="Deutscher J."/>
            <person name="Milohanic E."/>
        </authorList>
    </citation>
    <scope>FUNCTION</scope>
    <scope>CATALYTIC ACTIVITY</scope>
    <scope>INDUCTION</scope>
    <scope>SUBCELLULAR LOCATION</scope>
    <source>
        <strain>ATCC BAA-680 / CLIP 11262</strain>
    </source>
</reference>
<accession>Q92ET9</accession>
<comment type="function">
    <text evidence="6">Component of the dihydroxyacetone kinase complex, which is responsible for the phosphoenolpyruvate (PEP)-dependent phosphorylation of dihydroxyacetone. DhaM serves as the phosphoryl donor. Is phosphorylated by phosphoenolpyruvate in an EI- and HPr-dependent reaction, and a phosphorelay system on histidine residues finally leads to phosphoryl transfer to DhaL and dihydroxyacetone.</text>
</comment>
<comment type="catalytic activity">
    <reaction evidence="6">
        <text>dihydroxyacetone + phosphoenolpyruvate = dihydroxyacetone phosphate + pyruvate</text>
        <dbReference type="Rhea" id="RHEA:18381"/>
        <dbReference type="ChEBI" id="CHEBI:15361"/>
        <dbReference type="ChEBI" id="CHEBI:16016"/>
        <dbReference type="ChEBI" id="CHEBI:57642"/>
        <dbReference type="ChEBI" id="CHEBI:58702"/>
        <dbReference type="EC" id="2.7.1.121"/>
    </reaction>
</comment>
<comment type="subunit">
    <text evidence="1">Homodimer. The dihydroxyacetone kinase complex is composed of a homodimer of DhaM, a homodimer of DhaK and the subunit DhaL.</text>
</comment>
<comment type="subcellular location">
    <subcellularLocation>
        <location evidence="6">Cytoplasm</location>
    </subcellularLocation>
</comment>
<comment type="induction">
    <text evidence="3">Repressed by GolR.</text>
</comment>
<comment type="domain">
    <text evidence="2">The EIIA type-4 domain is phosphorylated by phospho-HPr on a histidyl residue. Then, it transfers the phosphoryl group to the EIIB type-4 domain.</text>
</comment>
<comment type="miscellaneous">
    <text evidence="6">Unlike the carbohydrate-specific transporters of the PTS, the complex DhaKML has no transport activity.</text>
</comment>
<comment type="similarity">
    <text evidence="5">Belongs to the PEP-utilizing enzyme family.</text>
</comment>
<keyword id="KW-0963">Cytoplasm</keyword>
<keyword id="KW-0319">Glycerol metabolism</keyword>
<keyword id="KW-0418">Kinase</keyword>
<keyword id="KW-0598">Phosphotransferase system</keyword>
<keyword id="KW-0808">Transferase</keyword>
<dbReference type="EC" id="2.7.1.121" evidence="6"/>
<dbReference type="EMBL" id="AL596164">
    <property type="protein sequence ID" value="CAC95602.1"/>
    <property type="molecule type" value="Genomic_DNA"/>
</dbReference>
<dbReference type="PIR" id="AB1479">
    <property type="entry name" value="AB1479"/>
</dbReference>
<dbReference type="SMR" id="Q92ET9"/>
<dbReference type="STRING" id="272626.gene:17564696"/>
<dbReference type="KEGG" id="lin:lin0369"/>
<dbReference type="eggNOG" id="COG3412">
    <property type="taxonomic scope" value="Bacteria"/>
</dbReference>
<dbReference type="HOGENOM" id="CLU_045361_2_2_9"/>
<dbReference type="OrthoDB" id="7065393at2"/>
<dbReference type="Proteomes" id="UP000002513">
    <property type="component" value="Chromosome"/>
</dbReference>
<dbReference type="GO" id="GO:0005737">
    <property type="term" value="C:cytoplasm"/>
    <property type="evidence" value="ECO:0007669"/>
    <property type="project" value="UniProtKB-SubCell"/>
</dbReference>
<dbReference type="GO" id="GO:0016020">
    <property type="term" value="C:membrane"/>
    <property type="evidence" value="ECO:0007669"/>
    <property type="project" value="InterPro"/>
</dbReference>
<dbReference type="GO" id="GO:0047324">
    <property type="term" value="F:phosphoenolpyruvate-glycerone phosphotransferase activity"/>
    <property type="evidence" value="ECO:0000314"/>
    <property type="project" value="UniProtKB"/>
</dbReference>
<dbReference type="GO" id="GO:0019563">
    <property type="term" value="P:glycerol catabolic process"/>
    <property type="evidence" value="ECO:0007669"/>
    <property type="project" value="InterPro"/>
</dbReference>
<dbReference type="GO" id="GO:0009401">
    <property type="term" value="P:phosphoenolpyruvate-dependent sugar phosphotransferase system"/>
    <property type="evidence" value="ECO:0007669"/>
    <property type="project" value="UniProtKB-KW"/>
</dbReference>
<dbReference type="Gene3D" id="3.40.50.510">
    <property type="entry name" value="Phosphotransferase system, mannose-type IIA component"/>
    <property type="match status" value="1"/>
</dbReference>
<dbReference type="InterPro" id="IPR039643">
    <property type="entry name" value="DhaM"/>
</dbReference>
<dbReference type="InterPro" id="IPR012844">
    <property type="entry name" value="DhaM_N"/>
</dbReference>
<dbReference type="InterPro" id="IPR004701">
    <property type="entry name" value="PTS_EIIA_man-typ"/>
</dbReference>
<dbReference type="InterPro" id="IPR036662">
    <property type="entry name" value="PTS_EIIA_man-typ_sf"/>
</dbReference>
<dbReference type="NCBIfam" id="TIGR02364">
    <property type="entry name" value="dha_pts"/>
    <property type="match status" value="1"/>
</dbReference>
<dbReference type="PANTHER" id="PTHR38594">
    <property type="entry name" value="PEP-DEPENDENT DIHYDROXYACETONE KINASE, PHOSPHORYL DONOR SUBUNIT DHAM"/>
    <property type="match status" value="1"/>
</dbReference>
<dbReference type="PANTHER" id="PTHR38594:SF1">
    <property type="entry name" value="PEP-DEPENDENT DIHYDROXYACETONE KINASE, PHOSPHORYL DONOR SUBUNIT DHAM"/>
    <property type="match status" value="1"/>
</dbReference>
<dbReference type="Pfam" id="PF03610">
    <property type="entry name" value="EIIA-man"/>
    <property type="match status" value="1"/>
</dbReference>
<dbReference type="SUPFAM" id="SSF53062">
    <property type="entry name" value="PTS system fructose IIA component-like"/>
    <property type="match status" value="1"/>
</dbReference>
<dbReference type="PROSITE" id="PS51096">
    <property type="entry name" value="PTS_EIIA_TYPE_4"/>
    <property type="match status" value="1"/>
</dbReference>
<name>DHAM2_LISIN</name>
<gene>
    <name evidence="4" type="primary">dhaM-2</name>
    <name evidence="7" type="ordered locus">lin0369</name>
</gene>
<evidence type="ECO:0000250" key="1">
    <source>
        <dbReference type="UniProtKB" id="Q9CIV6"/>
    </source>
</evidence>
<evidence type="ECO:0000255" key="2">
    <source>
        <dbReference type="PROSITE-ProRule" id="PRU00419"/>
    </source>
</evidence>
<evidence type="ECO:0000269" key="3">
    <source>
    </source>
</evidence>
<evidence type="ECO:0000303" key="4">
    <source>
    </source>
</evidence>
<evidence type="ECO:0000305" key="5"/>
<evidence type="ECO:0000305" key="6">
    <source>
    </source>
</evidence>
<evidence type="ECO:0000312" key="7">
    <source>
        <dbReference type="EMBL" id="CAC95602.1"/>
    </source>
</evidence>
<protein>
    <recommendedName>
        <fullName evidence="6">PEP-dependent dihydroxyacetone kinase 2, phosphoryl donor subunit DhaM</fullName>
        <ecNumber evidence="6">2.7.1.121</ecNumber>
    </recommendedName>
    <alternativeName>
        <fullName evidence="4">PTS system EIIA component</fullName>
    </alternativeName>
    <alternativeName>
        <fullName evidence="4">Phosphotransferase enzyme IIA component</fullName>
    </alternativeName>
</protein>
<proteinExistence type="evidence at protein level"/>
<feature type="chain" id="PRO_0000439403" description="PEP-dependent dihydroxyacetone kinase 2, phosphoryl donor subunit DhaM">
    <location>
        <begin position="1"/>
        <end position="125"/>
    </location>
</feature>
<feature type="domain" description="PTS EIIA type-4" evidence="2">
    <location>
        <begin position="1"/>
        <end position="125"/>
    </location>
</feature>
<feature type="active site" description="Tele-phosphohistidine intermediate" evidence="2">
    <location>
        <position position="9"/>
    </location>
</feature>